<proteinExistence type="inferred from homology"/>
<name>RSMA_BART1</name>
<dbReference type="EC" id="2.1.1.182" evidence="1"/>
<dbReference type="EMBL" id="AM260525">
    <property type="protein sequence ID" value="CAK01232.1"/>
    <property type="molecule type" value="Genomic_DNA"/>
</dbReference>
<dbReference type="RefSeq" id="WP_012231346.1">
    <property type="nucleotide sequence ID" value="NC_010161.1"/>
</dbReference>
<dbReference type="SMR" id="A9IRW8"/>
<dbReference type="KEGG" id="btr:BT_0822"/>
<dbReference type="eggNOG" id="COG0030">
    <property type="taxonomic scope" value="Bacteria"/>
</dbReference>
<dbReference type="HOGENOM" id="CLU_041220_0_1_5"/>
<dbReference type="Proteomes" id="UP000001592">
    <property type="component" value="Chromosome"/>
</dbReference>
<dbReference type="GO" id="GO:0005829">
    <property type="term" value="C:cytosol"/>
    <property type="evidence" value="ECO:0007669"/>
    <property type="project" value="TreeGrafter"/>
</dbReference>
<dbReference type="GO" id="GO:0052908">
    <property type="term" value="F:16S rRNA (adenine(1518)-N(6)/adenine(1519)-N(6))-dimethyltransferase activity"/>
    <property type="evidence" value="ECO:0007669"/>
    <property type="project" value="UniProtKB-EC"/>
</dbReference>
<dbReference type="GO" id="GO:0003723">
    <property type="term" value="F:RNA binding"/>
    <property type="evidence" value="ECO:0007669"/>
    <property type="project" value="UniProtKB-KW"/>
</dbReference>
<dbReference type="CDD" id="cd02440">
    <property type="entry name" value="AdoMet_MTases"/>
    <property type="match status" value="1"/>
</dbReference>
<dbReference type="FunFam" id="1.10.8.100:FF:000001">
    <property type="entry name" value="Ribosomal RNA small subunit methyltransferase A"/>
    <property type="match status" value="1"/>
</dbReference>
<dbReference type="Gene3D" id="1.10.8.100">
    <property type="entry name" value="Ribosomal RNA adenine dimethylase-like, domain 2"/>
    <property type="match status" value="1"/>
</dbReference>
<dbReference type="Gene3D" id="3.40.50.150">
    <property type="entry name" value="Vaccinia Virus protein VP39"/>
    <property type="match status" value="1"/>
</dbReference>
<dbReference type="HAMAP" id="MF_00607">
    <property type="entry name" value="16SrRNA_methyltr_A"/>
    <property type="match status" value="1"/>
</dbReference>
<dbReference type="InterPro" id="IPR001737">
    <property type="entry name" value="KsgA/Erm"/>
</dbReference>
<dbReference type="InterPro" id="IPR023165">
    <property type="entry name" value="rRNA_Ade_diMease-like_C"/>
</dbReference>
<dbReference type="InterPro" id="IPR020596">
    <property type="entry name" value="rRNA_Ade_Mease_Trfase_CS"/>
</dbReference>
<dbReference type="InterPro" id="IPR020598">
    <property type="entry name" value="rRNA_Ade_methylase_Trfase_N"/>
</dbReference>
<dbReference type="InterPro" id="IPR011530">
    <property type="entry name" value="rRNA_adenine_dimethylase"/>
</dbReference>
<dbReference type="InterPro" id="IPR029063">
    <property type="entry name" value="SAM-dependent_MTases_sf"/>
</dbReference>
<dbReference type="NCBIfam" id="TIGR00755">
    <property type="entry name" value="ksgA"/>
    <property type="match status" value="1"/>
</dbReference>
<dbReference type="PANTHER" id="PTHR11727">
    <property type="entry name" value="DIMETHYLADENOSINE TRANSFERASE"/>
    <property type="match status" value="1"/>
</dbReference>
<dbReference type="PANTHER" id="PTHR11727:SF7">
    <property type="entry name" value="DIMETHYLADENOSINE TRANSFERASE-RELATED"/>
    <property type="match status" value="1"/>
</dbReference>
<dbReference type="Pfam" id="PF00398">
    <property type="entry name" value="RrnaAD"/>
    <property type="match status" value="1"/>
</dbReference>
<dbReference type="SMART" id="SM00650">
    <property type="entry name" value="rADc"/>
    <property type="match status" value="1"/>
</dbReference>
<dbReference type="SUPFAM" id="SSF53335">
    <property type="entry name" value="S-adenosyl-L-methionine-dependent methyltransferases"/>
    <property type="match status" value="1"/>
</dbReference>
<dbReference type="PROSITE" id="PS01131">
    <property type="entry name" value="RRNA_A_DIMETH"/>
    <property type="match status" value="1"/>
</dbReference>
<dbReference type="PROSITE" id="PS51689">
    <property type="entry name" value="SAM_RNA_A_N6_MT"/>
    <property type="match status" value="1"/>
</dbReference>
<evidence type="ECO:0000255" key="1">
    <source>
        <dbReference type="HAMAP-Rule" id="MF_00607"/>
    </source>
</evidence>
<gene>
    <name evidence="1" type="primary">rsmA</name>
    <name evidence="1" type="synonym">ksgA</name>
    <name type="ordered locus">BT_0822</name>
</gene>
<reference key="1">
    <citation type="journal article" date="2007" name="Nat. Genet.">
        <title>Genomic analysis of Bartonella identifies type IV secretion systems as host adaptability factors.</title>
        <authorList>
            <person name="Saenz H.L."/>
            <person name="Engel P."/>
            <person name="Stoeckli M.C."/>
            <person name="Lanz C."/>
            <person name="Raddatz G."/>
            <person name="Vayssier-Taussat M."/>
            <person name="Birtles R."/>
            <person name="Schuster S.C."/>
            <person name="Dehio C."/>
        </authorList>
    </citation>
    <scope>NUCLEOTIDE SEQUENCE [LARGE SCALE GENOMIC DNA]</scope>
    <source>
        <strain>CIP 105476 / IBS 506</strain>
    </source>
</reference>
<organism>
    <name type="scientific">Bartonella tribocorum (strain CIP 105476 / IBS 506)</name>
    <dbReference type="NCBI Taxonomy" id="382640"/>
    <lineage>
        <taxon>Bacteria</taxon>
        <taxon>Pseudomonadati</taxon>
        <taxon>Pseudomonadota</taxon>
        <taxon>Alphaproteobacteria</taxon>
        <taxon>Hyphomicrobiales</taxon>
        <taxon>Bartonellaceae</taxon>
        <taxon>Bartonella</taxon>
    </lineage>
</organism>
<sequence length="276" mass="30547">MPIDNLPPLREVIDTYGLQAHKSLGQNFLFDLNLTSKIAHQAGTIEGKPVLEIGPGPGGLTRALLAKGAIVTAIERDERCIPALLEIEKHYPNQLKLICNDALKQDFSKLFGSSPEKPRIIANLPYNIGTQLLLNWLLVEPWPPFYESMTLMFQREVAKRITAKPQSSHYGRLSVLTGWRTIAKIAFDVPPQAFIPAPKVTSSVVHIIPRAQPLVCSAQKLSLITKTAFGQRRKMLRQNLKTLGGEIILEKAGIDGTRRAETLSISEFVTLANLIT</sequence>
<comment type="function">
    <text evidence="1">Specifically dimethylates two adjacent adenosines (A1518 and A1519) in the loop of a conserved hairpin near the 3'-end of 16S rRNA in the 30S particle. May play a critical role in biogenesis of 30S subunits.</text>
</comment>
<comment type="catalytic activity">
    <reaction evidence="1">
        <text>adenosine(1518)/adenosine(1519) in 16S rRNA + 4 S-adenosyl-L-methionine = N(6)-dimethyladenosine(1518)/N(6)-dimethyladenosine(1519) in 16S rRNA + 4 S-adenosyl-L-homocysteine + 4 H(+)</text>
        <dbReference type="Rhea" id="RHEA:19609"/>
        <dbReference type="Rhea" id="RHEA-COMP:10232"/>
        <dbReference type="Rhea" id="RHEA-COMP:10233"/>
        <dbReference type="ChEBI" id="CHEBI:15378"/>
        <dbReference type="ChEBI" id="CHEBI:57856"/>
        <dbReference type="ChEBI" id="CHEBI:59789"/>
        <dbReference type="ChEBI" id="CHEBI:74411"/>
        <dbReference type="ChEBI" id="CHEBI:74493"/>
        <dbReference type="EC" id="2.1.1.182"/>
    </reaction>
</comment>
<comment type="subcellular location">
    <subcellularLocation>
        <location evidence="1">Cytoplasm</location>
    </subcellularLocation>
</comment>
<comment type="similarity">
    <text evidence="1">Belongs to the class I-like SAM-binding methyltransferase superfamily. rRNA adenine N(6)-methyltransferase family. RsmA subfamily.</text>
</comment>
<feature type="chain" id="PRO_1000082545" description="Ribosomal RNA small subunit methyltransferase A">
    <location>
        <begin position="1"/>
        <end position="276"/>
    </location>
</feature>
<feature type="binding site" evidence="1">
    <location>
        <position position="27"/>
    </location>
    <ligand>
        <name>S-adenosyl-L-methionine</name>
        <dbReference type="ChEBI" id="CHEBI:59789"/>
    </ligand>
</feature>
<feature type="binding site" evidence="1">
    <location>
        <position position="29"/>
    </location>
    <ligand>
        <name>S-adenosyl-L-methionine</name>
        <dbReference type="ChEBI" id="CHEBI:59789"/>
    </ligand>
</feature>
<feature type="binding site" evidence="1">
    <location>
        <position position="54"/>
    </location>
    <ligand>
        <name>S-adenosyl-L-methionine</name>
        <dbReference type="ChEBI" id="CHEBI:59789"/>
    </ligand>
</feature>
<feature type="binding site" evidence="1">
    <location>
        <position position="75"/>
    </location>
    <ligand>
        <name>S-adenosyl-L-methionine</name>
        <dbReference type="ChEBI" id="CHEBI:59789"/>
    </ligand>
</feature>
<feature type="binding site" evidence="1">
    <location>
        <position position="101"/>
    </location>
    <ligand>
        <name>S-adenosyl-L-methionine</name>
        <dbReference type="ChEBI" id="CHEBI:59789"/>
    </ligand>
</feature>
<feature type="binding site" evidence="1">
    <location>
        <position position="123"/>
    </location>
    <ligand>
        <name>S-adenosyl-L-methionine</name>
        <dbReference type="ChEBI" id="CHEBI:59789"/>
    </ligand>
</feature>
<protein>
    <recommendedName>
        <fullName evidence="1">Ribosomal RNA small subunit methyltransferase A</fullName>
        <ecNumber evidence="1">2.1.1.182</ecNumber>
    </recommendedName>
    <alternativeName>
        <fullName evidence="1">16S rRNA (adenine(1518)-N(6)/adenine(1519)-N(6))-dimethyltransferase</fullName>
    </alternativeName>
    <alternativeName>
        <fullName evidence="1">16S rRNA dimethyladenosine transferase</fullName>
    </alternativeName>
    <alternativeName>
        <fullName evidence="1">16S rRNA dimethylase</fullName>
    </alternativeName>
    <alternativeName>
        <fullName evidence="1">S-adenosylmethionine-6-N', N'-adenosyl(rRNA) dimethyltransferase</fullName>
    </alternativeName>
</protein>
<keyword id="KW-0963">Cytoplasm</keyword>
<keyword id="KW-0489">Methyltransferase</keyword>
<keyword id="KW-0694">RNA-binding</keyword>
<keyword id="KW-0698">rRNA processing</keyword>
<keyword id="KW-0949">S-adenosyl-L-methionine</keyword>
<keyword id="KW-0808">Transferase</keyword>
<accession>A9IRW8</accession>